<name>CLPS_YERPY</name>
<proteinExistence type="inferred from homology"/>
<accession>B1JRG2</accession>
<protein>
    <recommendedName>
        <fullName evidence="1">ATP-dependent Clp protease adapter protein ClpS</fullName>
    </recommendedName>
</protein>
<sequence>MGKNNDWLNFEHLVKDKQIEALQPPSMYKVILNNDDYTPMEFVIDVLQKFFSYDIERATQLMLNVHYQGKAICGVFTAEVAETKVAHVNQYARENEHPLLCTLEKA</sequence>
<reference key="1">
    <citation type="submission" date="2008-02" db="EMBL/GenBank/DDBJ databases">
        <title>Complete sequence of Yersinia pseudotuberculosis YPIII.</title>
        <authorList>
            <consortium name="US DOE Joint Genome Institute"/>
            <person name="Copeland A."/>
            <person name="Lucas S."/>
            <person name="Lapidus A."/>
            <person name="Glavina del Rio T."/>
            <person name="Dalin E."/>
            <person name="Tice H."/>
            <person name="Bruce D."/>
            <person name="Goodwin L."/>
            <person name="Pitluck S."/>
            <person name="Munk A.C."/>
            <person name="Brettin T."/>
            <person name="Detter J.C."/>
            <person name="Han C."/>
            <person name="Tapia R."/>
            <person name="Schmutz J."/>
            <person name="Larimer F."/>
            <person name="Land M."/>
            <person name="Hauser L."/>
            <person name="Challacombe J.F."/>
            <person name="Green L."/>
            <person name="Lindler L.E."/>
            <person name="Nikolich M.P."/>
            <person name="Richardson P."/>
        </authorList>
    </citation>
    <scope>NUCLEOTIDE SEQUENCE [LARGE SCALE GENOMIC DNA]</scope>
    <source>
        <strain>YPIII</strain>
    </source>
</reference>
<gene>
    <name evidence="1" type="primary">clpS</name>
    <name type="ordered locus">YPK_2693</name>
</gene>
<dbReference type="EMBL" id="CP000950">
    <property type="protein sequence ID" value="ACA68970.1"/>
    <property type="molecule type" value="Genomic_DNA"/>
</dbReference>
<dbReference type="RefSeq" id="WP_002211349.1">
    <property type="nucleotide sequence ID" value="NZ_CP009792.1"/>
</dbReference>
<dbReference type="SMR" id="B1JRG2"/>
<dbReference type="GeneID" id="96664964"/>
<dbReference type="KEGG" id="ypy:YPK_2693"/>
<dbReference type="PATRIC" id="fig|502800.11.peg.3395"/>
<dbReference type="GO" id="GO:0030163">
    <property type="term" value="P:protein catabolic process"/>
    <property type="evidence" value="ECO:0007669"/>
    <property type="project" value="InterPro"/>
</dbReference>
<dbReference type="GO" id="GO:0006508">
    <property type="term" value="P:proteolysis"/>
    <property type="evidence" value="ECO:0007669"/>
    <property type="project" value="UniProtKB-UniRule"/>
</dbReference>
<dbReference type="FunFam" id="3.30.1390.10:FF:000002">
    <property type="entry name" value="ATP-dependent Clp protease adapter protein ClpS"/>
    <property type="match status" value="1"/>
</dbReference>
<dbReference type="Gene3D" id="3.30.1390.10">
    <property type="match status" value="1"/>
</dbReference>
<dbReference type="HAMAP" id="MF_00302">
    <property type="entry name" value="ClpS"/>
    <property type="match status" value="1"/>
</dbReference>
<dbReference type="InterPro" id="IPR022935">
    <property type="entry name" value="ClpS"/>
</dbReference>
<dbReference type="InterPro" id="IPR003769">
    <property type="entry name" value="ClpS_core"/>
</dbReference>
<dbReference type="InterPro" id="IPR014719">
    <property type="entry name" value="Ribosomal_bL12_C/ClpS-like"/>
</dbReference>
<dbReference type="NCBIfam" id="NF000670">
    <property type="entry name" value="PRK00033.1-3"/>
    <property type="match status" value="1"/>
</dbReference>
<dbReference type="NCBIfam" id="NF000672">
    <property type="entry name" value="PRK00033.1-5"/>
    <property type="match status" value="1"/>
</dbReference>
<dbReference type="PANTHER" id="PTHR33473:SF19">
    <property type="entry name" value="ATP-DEPENDENT CLP PROTEASE ADAPTER PROTEIN CLPS"/>
    <property type="match status" value="1"/>
</dbReference>
<dbReference type="PANTHER" id="PTHR33473">
    <property type="entry name" value="ATP-DEPENDENT CLP PROTEASE ADAPTER PROTEIN CLPS1, CHLOROPLASTIC"/>
    <property type="match status" value="1"/>
</dbReference>
<dbReference type="Pfam" id="PF02617">
    <property type="entry name" value="ClpS"/>
    <property type="match status" value="1"/>
</dbReference>
<dbReference type="SUPFAM" id="SSF54736">
    <property type="entry name" value="ClpS-like"/>
    <property type="match status" value="1"/>
</dbReference>
<organism>
    <name type="scientific">Yersinia pseudotuberculosis serotype O:3 (strain YPIII)</name>
    <dbReference type="NCBI Taxonomy" id="502800"/>
    <lineage>
        <taxon>Bacteria</taxon>
        <taxon>Pseudomonadati</taxon>
        <taxon>Pseudomonadota</taxon>
        <taxon>Gammaproteobacteria</taxon>
        <taxon>Enterobacterales</taxon>
        <taxon>Yersiniaceae</taxon>
        <taxon>Yersinia</taxon>
    </lineage>
</organism>
<evidence type="ECO:0000255" key="1">
    <source>
        <dbReference type="HAMAP-Rule" id="MF_00302"/>
    </source>
</evidence>
<feature type="chain" id="PRO_1000115490" description="ATP-dependent Clp protease adapter protein ClpS">
    <location>
        <begin position="1"/>
        <end position="106"/>
    </location>
</feature>
<comment type="function">
    <text evidence="1">Involved in the modulation of the specificity of the ClpAP-mediated ATP-dependent protein degradation.</text>
</comment>
<comment type="subunit">
    <text evidence="1">Binds to the N-terminal domain of the chaperone ClpA.</text>
</comment>
<comment type="similarity">
    <text evidence="1">Belongs to the ClpS family.</text>
</comment>